<feature type="chain" id="PRO_0000119152" description="Kelch repeat protein B10">
    <location>
        <begin position="1"/>
        <end position="158"/>
    </location>
</feature>
<feature type="repeat" description="Kelch 1">
    <location>
        <begin position="25"/>
        <end position="76"/>
    </location>
</feature>
<feature type="repeat" description="Kelch 2">
    <location>
        <begin position="77"/>
        <end position="129"/>
    </location>
</feature>
<keyword id="KW-0880">Kelch repeat</keyword>
<keyword id="KW-0677">Repeat</keyword>
<protein>
    <recommendedName>
        <fullName>Kelch repeat protein B10</fullName>
    </recommendedName>
</protein>
<organism>
    <name type="scientific">Vaccinia virus (strain Ankara)</name>
    <name type="common">VACV</name>
    <dbReference type="NCBI Taxonomy" id="126794"/>
    <lineage>
        <taxon>Viruses</taxon>
        <taxon>Varidnaviria</taxon>
        <taxon>Bamfordvirae</taxon>
        <taxon>Nucleocytoviricota</taxon>
        <taxon>Pokkesviricetes</taxon>
        <taxon>Chitovirales</taxon>
        <taxon>Poxviridae</taxon>
        <taxon>Chordopoxvirinae</taxon>
        <taxon>Orthopoxvirus</taxon>
        <taxon>Vaccinia virus</taxon>
    </lineage>
</organism>
<evidence type="ECO:0000305" key="1"/>
<reference key="1">
    <citation type="journal article" date="1998" name="Virology">
        <title>The complete genomic sequence of the modified vaccinia Ankara strain: comparison with other orthopoxviruses.</title>
        <authorList>
            <person name="Antoine G."/>
            <person name="Scheiflinger F."/>
            <person name="Dorner F."/>
            <person name="Falkner F.G."/>
        </authorList>
    </citation>
    <scope>NUCLEOTIDE SEQUENCE [LARGE SCALE GENOMIC DNA]</scope>
</reference>
<reference key="2">
    <citation type="submission" date="2004-04" db="EMBL/GenBank/DDBJ databases">
        <authorList>
            <person name="Esposito J.J."/>
            <person name="Frace M."/>
            <person name="Sammons S.A."/>
            <person name="Olsen-Rasmussen M.S."/>
            <person name="Osborne J."/>
            <person name="Khristova M."/>
            <person name="Wohlhueter R.M."/>
        </authorList>
    </citation>
    <scope>NUCLEOTIDE SEQUENCE [LARGE SCALE GENOMIC DNA]</scope>
    <source>
        <strain>Isolate Acambis 3000</strain>
    </source>
</reference>
<sequence>MDSGIYETPINYKKSNVSAVSVNNTIFVTGGLFINNSNSTIVVNNMEKLDIYKDKQWSIIEMPMARVYHGIDSTFGMLYFAGGLSVTEQYGNLEKNNEISCYNPRTNKWFDISYTIYKISISSLCKLNNVFYVFSKDIGYVEKYDGLPAIKALSTSPY</sequence>
<proteinExistence type="inferred from homology"/>
<comment type="similarity">
    <text evidence="1">Belongs to the poxviruses Kelch family.</text>
</comment>
<dbReference type="EMBL" id="U94848">
    <property type="protein sequence ID" value="AAB96551.1"/>
    <property type="molecule type" value="Genomic_DNA"/>
</dbReference>
<dbReference type="EMBL" id="AY603355">
    <property type="protein sequence ID" value="AAT10574.1"/>
    <property type="molecule type" value="Genomic_DNA"/>
</dbReference>
<dbReference type="PIR" id="T37446">
    <property type="entry name" value="T37446"/>
</dbReference>
<dbReference type="SMR" id="O57257"/>
<dbReference type="Proteomes" id="UP000159908">
    <property type="component" value="Segment"/>
</dbReference>
<dbReference type="Proteomes" id="UP000172909">
    <property type="component" value="Segment"/>
</dbReference>
<dbReference type="Gene3D" id="2.120.10.80">
    <property type="entry name" value="Kelch-type beta propeller"/>
    <property type="match status" value="1"/>
</dbReference>
<dbReference type="InterPro" id="IPR015915">
    <property type="entry name" value="Kelch-typ_b-propeller"/>
</dbReference>
<dbReference type="PANTHER" id="PTHR24412:SF163">
    <property type="entry name" value="CALICIN"/>
    <property type="match status" value="1"/>
</dbReference>
<dbReference type="PANTHER" id="PTHR24412">
    <property type="entry name" value="KELCH PROTEIN"/>
    <property type="match status" value="1"/>
</dbReference>
<dbReference type="SUPFAM" id="SSF117281">
    <property type="entry name" value="Kelch motif"/>
    <property type="match status" value="1"/>
</dbReference>
<accession>O57257</accession>
<organismHost>
    <name type="scientific">Homo sapiens</name>
    <name type="common">Human</name>
    <dbReference type="NCBI Taxonomy" id="9606"/>
</organismHost>
<name>VB10_VACCA</name>
<gene>
    <name type="ordered locus">MVA178R</name>
    <name type="ordered locus">ACAM3000_MVA_178</name>
</gene>